<gene>
    <name type="primary">mnhA2</name>
    <name type="synonym">mrpA2</name>
    <name type="ordered locus">USA300HOU_0643</name>
</gene>
<name>MNHA2_STAAT</name>
<protein>
    <recommendedName>
        <fullName>Putative antiporter subunit mnhA2</fullName>
    </recommendedName>
    <alternativeName>
        <fullName>Mrp complex subunit A2</fullName>
    </alternativeName>
    <alternativeName>
        <fullName>Putative NADH-ubiquinone oxidoreductase subunit mnhA2</fullName>
    </alternativeName>
</protein>
<reference key="1">
    <citation type="journal article" date="2007" name="BMC Microbiol.">
        <title>Subtle genetic changes enhance virulence of methicillin resistant and sensitive Staphylococcus aureus.</title>
        <authorList>
            <person name="Highlander S.K."/>
            <person name="Hulten K.G."/>
            <person name="Qin X."/>
            <person name="Jiang H."/>
            <person name="Yerrapragada S."/>
            <person name="Mason E.O. Jr."/>
            <person name="Shang Y."/>
            <person name="Williams T.M."/>
            <person name="Fortunov R.M."/>
            <person name="Liu Y."/>
            <person name="Igboeli O."/>
            <person name="Petrosino J."/>
            <person name="Tirumalai M."/>
            <person name="Uzman A."/>
            <person name="Fox G.E."/>
            <person name="Cardenas A.M."/>
            <person name="Muzny D.M."/>
            <person name="Hemphill L."/>
            <person name="Ding Y."/>
            <person name="Dugan S."/>
            <person name="Blyth P.R."/>
            <person name="Buhay C.J."/>
            <person name="Dinh H.H."/>
            <person name="Hawes A.C."/>
            <person name="Holder M."/>
            <person name="Kovar C.L."/>
            <person name="Lee S.L."/>
            <person name="Liu W."/>
            <person name="Nazareth L.V."/>
            <person name="Wang Q."/>
            <person name="Zhou J."/>
            <person name="Kaplan S.L."/>
            <person name="Weinstock G.M."/>
        </authorList>
    </citation>
    <scope>NUCLEOTIDE SEQUENCE [LARGE SCALE GENOMIC DNA]</scope>
    <source>
        <strain>USA300 / TCH1516</strain>
    </source>
</reference>
<feature type="chain" id="PRO_0000372296" description="Putative antiporter subunit mnhA2">
    <location>
        <begin position="1"/>
        <end position="800"/>
    </location>
</feature>
<feature type="transmembrane region" description="Helical" evidence="2">
    <location>
        <begin position="1"/>
        <end position="21"/>
    </location>
</feature>
<feature type="transmembrane region" description="Helical" evidence="2">
    <location>
        <begin position="33"/>
        <end position="53"/>
    </location>
</feature>
<feature type="transmembrane region" description="Helical" evidence="2">
    <location>
        <begin position="78"/>
        <end position="98"/>
    </location>
</feature>
<feature type="transmembrane region" description="Helical" evidence="2">
    <location>
        <begin position="118"/>
        <end position="138"/>
    </location>
</feature>
<feature type="transmembrane region" description="Helical" evidence="2">
    <location>
        <begin position="167"/>
        <end position="187"/>
    </location>
</feature>
<feature type="transmembrane region" description="Helical" evidence="2">
    <location>
        <begin position="207"/>
        <end position="227"/>
    </location>
</feature>
<feature type="transmembrane region" description="Helical" evidence="2">
    <location>
        <begin position="241"/>
        <end position="261"/>
    </location>
</feature>
<feature type="transmembrane region" description="Helical" evidence="2">
    <location>
        <begin position="273"/>
        <end position="293"/>
    </location>
</feature>
<feature type="transmembrane region" description="Helical" evidence="2">
    <location>
        <begin position="300"/>
        <end position="320"/>
    </location>
</feature>
<feature type="transmembrane region" description="Helical" evidence="2">
    <location>
        <begin position="331"/>
        <end position="351"/>
    </location>
</feature>
<feature type="transmembrane region" description="Helical" evidence="2">
    <location>
        <begin position="387"/>
        <end position="407"/>
    </location>
</feature>
<feature type="transmembrane region" description="Helical" evidence="2">
    <location>
        <begin position="424"/>
        <end position="444"/>
    </location>
</feature>
<feature type="transmembrane region" description="Helical" evidence="2">
    <location>
        <begin position="472"/>
        <end position="492"/>
    </location>
</feature>
<feature type="transmembrane region" description="Helical" evidence="2">
    <location>
        <begin position="527"/>
        <end position="547"/>
    </location>
</feature>
<feature type="transmembrane region" description="Helical" evidence="2">
    <location>
        <begin position="595"/>
        <end position="615"/>
    </location>
</feature>
<feature type="transmembrane region" description="Helical" evidence="2">
    <location>
        <begin position="627"/>
        <end position="647"/>
    </location>
</feature>
<feature type="transmembrane region" description="Helical" evidence="2">
    <location>
        <begin position="651"/>
        <end position="671"/>
    </location>
</feature>
<feature type="transmembrane region" description="Helical" evidence="2">
    <location>
        <begin position="676"/>
        <end position="696"/>
    </location>
</feature>
<feature type="transmembrane region" description="Helical" evidence="2">
    <location>
        <begin position="712"/>
        <end position="732"/>
    </location>
</feature>
<feature type="transmembrane region" description="Helical" evidence="2">
    <location>
        <begin position="768"/>
        <end position="788"/>
    </location>
</feature>
<keyword id="KW-0050">Antiport</keyword>
<keyword id="KW-1003">Cell membrane</keyword>
<keyword id="KW-0406">Ion transport</keyword>
<keyword id="KW-0472">Membrane</keyword>
<keyword id="KW-0812">Transmembrane</keyword>
<keyword id="KW-1133">Transmembrane helix</keyword>
<keyword id="KW-0813">Transport</keyword>
<proteinExistence type="inferred from homology"/>
<dbReference type="EMBL" id="CP000730">
    <property type="protein sequence ID" value="ABX28665.1"/>
    <property type="molecule type" value="Genomic_DNA"/>
</dbReference>
<dbReference type="RefSeq" id="WP_000060776.1">
    <property type="nucleotide sequence ID" value="NC_010079.1"/>
</dbReference>
<dbReference type="SMR" id="A8Z144"/>
<dbReference type="KEGG" id="sax:USA300HOU_0643"/>
<dbReference type="HOGENOM" id="CLU_007100_2_1_9"/>
<dbReference type="GO" id="GO:0005886">
    <property type="term" value="C:plasma membrane"/>
    <property type="evidence" value="ECO:0007669"/>
    <property type="project" value="UniProtKB-SubCell"/>
</dbReference>
<dbReference type="GO" id="GO:0015297">
    <property type="term" value="F:antiporter activity"/>
    <property type="evidence" value="ECO:0007669"/>
    <property type="project" value="UniProtKB-KW"/>
</dbReference>
<dbReference type="GO" id="GO:0006811">
    <property type="term" value="P:monoatomic ion transport"/>
    <property type="evidence" value="ECO:0007669"/>
    <property type="project" value="UniProtKB-KW"/>
</dbReference>
<dbReference type="InterPro" id="IPR050616">
    <property type="entry name" value="CPA3_Na-H_Antiporter_A"/>
</dbReference>
<dbReference type="InterPro" id="IPR025383">
    <property type="entry name" value="MrpA_C/MbhD"/>
</dbReference>
<dbReference type="InterPro" id="IPR046806">
    <property type="entry name" value="MrpA_C/MbhE"/>
</dbReference>
<dbReference type="InterPro" id="IPR001750">
    <property type="entry name" value="ND/Mrp_TM"/>
</dbReference>
<dbReference type="InterPro" id="IPR001516">
    <property type="entry name" value="Proton_antipo_N"/>
</dbReference>
<dbReference type="NCBIfam" id="NF009286">
    <property type="entry name" value="PRK12646.1"/>
    <property type="match status" value="1"/>
</dbReference>
<dbReference type="PANTHER" id="PTHR43373">
    <property type="entry name" value="NA(+)/H(+) ANTIPORTER SUBUNIT"/>
    <property type="match status" value="1"/>
</dbReference>
<dbReference type="PANTHER" id="PTHR43373:SF1">
    <property type="entry name" value="NA(+)_H(+) ANTIPORTER SUBUNIT A"/>
    <property type="match status" value="1"/>
</dbReference>
<dbReference type="Pfam" id="PF13244">
    <property type="entry name" value="MbhD"/>
    <property type="match status" value="1"/>
</dbReference>
<dbReference type="Pfam" id="PF20501">
    <property type="entry name" value="MbhE"/>
    <property type="match status" value="1"/>
</dbReference>
<dbReference type="Pfam" id="PF00361">
    <property type="entry name" value="Proton_antipo_M"/>
    <property type="match status" value="1"/>
</dbReference>
<dbReference type="Pfam" id="PF00662">
    <property type="entry name" value="Proton_antipo_N"/>
    <property type="match status" value="1"/>
</dbReference>
<dbReference type="PRINTS" id="PR01434">
    <property type="entry name" value="NADHDHGNASE5"/>
</dbReference>
<organism>
    <name type="scientific">Staphylococcus aureus (strain USA300 / TCH1516)</name>
    <dbReference type="NCBI Taxonomy" id="451516"/>
    <lineage>
        <taxon>Bacteria</taxon>
        <taxon>Bacillati</taxon>
        <taxon>Bacillota</taxon>
        <taxon>Bacilli</taxon>
        <taxon>Bacillales</taxon>
        <taxon>Staphylococcaceae</taxon>
        <taxon>Staphylococcus</taxon>
    </lineage>
</organism>
<sequence>MSLVYLLIAILVIMAMILLMSKRRALAKYAGYIALVAPVISSIYFLIQIPSVAKLQYLSTSIPWIKTLDINLDLRLDGLSLMFSLIISLIGIAVFFYATQYLSSRKDNLPRFYFYLTLFMFSMIGIVLSDNTILMYIFWELTSVSSFLLISYWYNNGDSQFGAIQSFMITVFGGLALLVGFIMLYIMTGTNNITEILGQADHIKNHGLFIPMIFMFLLGAFTKSAQFPFHIWLPRAMAAPTPVSAYLHSATMVKAGIFLLLRFTPLLGLSNMYVYIVTFVGLITMLFGSITALKQWDLKGILAYSTISQLGMIMAMVGIGGGYAQHQQDAIASIYVFVLFGALFHLMNHAIFKCALFMGVGILDHEAGSRDIRILSGMRQLFPKMNLVMTIAALSMAGVPFLNGFLSKEMFLDALTQTGQLSQFSLISMIAIVFVGVIASVFTFTYALYMVKEVFWTKYDSKVFTKKNIHEPWLFSLPSLILMVLVPVIFFVPNIFGKGIIVLALRAVSGGNHQIDQLAPHVSQWHGFNIPLLLTIIIILLGSVLAIKVDWKKVFTGKIRQISVSKSYEMVYRHFEKFATKRFKRVMQDRLNQYIIMTLGIFMIIIGYGYIRIGLPKVHQLHVSEFGALEIILAIVTVTIGISLIFIRQRLTMVILNGVIGFVVTLFFIAMKAPDLALTQLVVETITTILFIVSFSRLPNVPRSNANKKREIIKISVSLLMALIVVSLIFITQQTDGLSSISDFYLKADKLTGGKNIVNAILGDFRALDTLFEGLVLIITGLGIYTLLNYQDRRGQDERE</sequence>
<evidence type="ECO:0000250" key="1"/>
<evidence type="ECO:0000255" key="2"/>
<evidence type="ECO:0000305" key="3"/>
<comment type="subunit">
    <text evidence="1">May form a heterooligomeric complex that consists of seven subunits: mnhA2, mnhB2, mnhC2, mnhD2, mnhE2, mnhF2 and mnhG2.</text>
</comment>
<comment type="subcellular location">
    <subcellularLocation>
        <location evidence="3">Cell membrane</location>
        <topology evidence="3">Multi-pass membrane protein</topology>
    </subcellularLocation>
</comment>
<comment type="similarity">
    <text evidence="3">Belongs to the CPA3 antiporters (TC 2.A.63) subunit A family.</text>
</comment>
<accession>A8Z144</accession>